<dbReference type="EMBL" id="X65025">
    <property type="protein sequence ID" value="CAA46159.1"/>
    <property type="molecule type" value="mRNA"/>
</dbReference>
<dbReference type="PIR" id="S22644">
    <property type="entry name" value="R6UTP1"/>
</dbReference>
<dbReference type="SMR" id="P26643"/>
<dbReference type="VEuPathDB" id="TriTrypDB:BCY84_21719"/>
<dbReference type="VEuPathDB" id="TriTrypDB:TcBrA4_0116860"/>
<dbReference type="VEuPathDB" id="TriTrypDB:TcCL_Unassigned00554"/>
<dbReference type="VEuPathDB" id="TriTrypDB:TcCLB.510823.70"/>
<dbReference type="VEuPathDB" id="TriTrypDB:TcG_02527"/>
<dbReference type="GO" id="GO:0022625">
    <property type="term" value="C:cytosolic large ribosomal subunit"/>
    <property type="evidence" value="ECO:0007669"/>
    <property type="project" value="TreeGrafter"/>
</dbReference>
<dbReference type="GO" id="GO:0030295">
    <property type="term" value="F:protein kinase activator activity"/>
    <property type="evidence" value="ECO:0007669"/>
    <property type="project" value="TreeGrafter"/>
</dbReference>
<dbReference type="GO" id="GO:0043021">
    <property type="term" value="F:ribonucleoprotein complex binding"/>
    <property type="evidence" value="ECO:0007669"/>
    <property type="project" value="TreeGrafter"/>
</dbReference>
<dbReference type="GO" id="GO:0003735">
    <property type="term" value="F:structural constituent of ribosome"/>
    <property type="evidence" value="ECO:0007669"/>
    <property type="project" value="InterPro"/>
</dbReference>
<dbReference type="GO" id="GO:0002181">
    <property type="term" value="P:cytoplasmic translation"/>
    <property type="evidence" value="ECO:0007669"/>
    <property type="project" value="TreeGrafter"/>
</dbReference>
<dbReference type="GO" id="GO:0006414">
    <property type="term" value="P:translational elongation"/>
    <property type="evidence" value="ECO:0007669"/>
    <property type="project" value="InterPro"/>
</dbReference>
<dbReference type="CDD" id="cd05831">
    <property type="entry name" value="Ribosomal_P1"/>
    <property type="match status" value="1"/>
</dbReference>
<dbReference type="FunFam" id="1.10.10.1410:FF:000002">
    <property type="entry name" value="60S acidic ribosomal protein P2"/>
    <property type="match status" value="1"/>
</dbReference>
<dbReference type="Gene3D" id="1.10.10.1410">
    <property type="match status" value="1"/>
</dbReference>
<dbReference type="HAMAP" id="MF_01478">
    <property type="entry name" value="Ribosomal_L12_arch"/>
    <property type="match status" value="1"/>
</dbReference>
<dbReference type="InterPro" id="IPR038716">
    <property type="entry name" value="P1/P2_N_sf"/>
</dbReference>
<dbReference type="InterPro" id="IPR027534">
    <property type="entry name" value="Ribosomal_P1/P2"/>
</dbReference>
<dbReference type="InterPro" id="IPR001859">
    <property type="entry name" value="Ribosomal_P1/P2_euk"/>
</dbReference>
<dbReference type="PANTHER" id="PTHR45696">
    <property type="entry name" value="60S ACIDIC RIBOSOMAL PROTEIN P1"/>
    <property type="match status" value="1"/>
</dbReference>
<dbReference type="PANTHER" id="PTHR45696:SF10">
    <property type="entry name" value="LARGE RIBOSOMAL SUBUNIT PROTEIN P1"/>
    <property type="match status" value="1"/>
</dbReference>
<dbReference type="Pfam" id="PF00428">
    <property type="entry name" value="Ribosomal_60s"/>
    <property type="match status" value="1"/>
</dbReference>
<dbReference type="PRINTS" id="PR00456">
    <property type="entry name" value="RIBOSOMALP2"/>
</dbReference>
<sequence>MSSKQQLACTYAALILADSGKTDMDSLLKVTKAAGVDVSKGMASAFASILKNVDINDVLSKVSFGGVAPAAGGATAAPAAAAAAAAPAAAAAKKEEEEEDDDMGFGLFD</sequence>
<evidence type="ECO:0000256" key="1">
    <source>
        <dbReference type="SAM" id="MobiDB-lite"/>
    </source>
</evidence>
<evidence type="ECO:0000305" key="2"/>
<reference key="1">
    <citation type="journal article" date="1992" name="Nucleic Acids Res.">
        <title>Nucleotide sequence of a cDNA encoding a Trypanosoma cruzi acidic ribosomal P1 type protein.</title>
        <authorList>
            <person name="Vazquez M."/>
            <person name="Schijman A."/>
            <person name="Levin M."/>
        </authorList>
    </citation>
    <scope>NUCLEOTIDE SEQUENCE [MRNA]</scope>
</reference>
<feature type="chain" id="PRO_0000157696" description="Large ribosomal subunit protein P1">
    <location>
        <begin position="1"/>
        <end position="109"/>
    </location>
</feature>
<feature type="region of interest" description="Disordered" evidence="1">
    <location>
        <begin position="90"/>
        <end position="109"/>
    </location>
</feature>
<accession>P26643</accession>
<name>RLA1_TRYCR</name>
<keyword id="KW-0597">Phosphoprotein</keyword>
<keyword id="KW-0687">Ribonucleoprotein</keyword>
<keyword id="KW-0689">Ribosomal protein</keyword>
<organism>
    <name type="scientific">Trypanosoma cruzi</name>
    <dbReference type="NCBI Taxonomy" id="5693"/>
    <lineage>
        <taxon>Eukaryota</taxon>
        <taxon>Discoba</taxon>
        <taxon>Euglenozoa</taxon>
        <taxon>Kinetoplastea</taxon>
        <taxon>Metakinetoplastina</taxon>
        <taxon>Trypanosomatida</taxon>
        <taxon>Trypanosomatidae</taxon>
        <taxon>Trypanosoma</taxon>
        <taxon>Schizotrypanum</taxon>
    </lineage>
</organism>
<comment type="function">
    <text>Plays an important role in the elongation step of protein synthesis.</text>
</comment>
<comment type="subunit">
    <text>P1 and P2 exist as dimers at the large ribosomal subunit.</text>
</comment>
<comment type="similarity">
    <text evidence="2">Belongs to the eukaryotic ribosomal protein P1/P2 family.</text>
</comment>
<protein>
    <recommendedName>
        <fullName evidence="2">Large ribosomal subunit protein P1</fullName>
    </recommendedName>
    <alternativeName>
        <fullName>60S acidic ribosomal protein P1</fullName>
    </alternativeName>
</protein>
<proteinExistence type="inferred from homology"/>